<accession>Q4ZZU4</accession>
<protein>
    <recommendedName>
        <fullName evidence="1">Glutamate--cysteine ligase</fullName>
        <ecNumber evidence="1">6.3.2.2</ecNumber>
    </recommendedName>
    <alternativeName>
        <fullName evidence="1">Gamma-ECS</fullName>
        <shortName evidence="1">GCS</shortName>
    </alternativeName>
    <alternativeName>
        <fullName evidence="1">Gamma-glutamylcysteine synthetase</fullName>
    </alternativeName>
</protein>
<gene>
    <name evidence="1" type="primary">gshA</name>
    <name type="ordered locus">Psyr_0255</name>
</gene>
<organism>
    <name type="scientific">Pseudomonas syringae pv. syringae (strain B728a)</name>
    <dbReference type="NCBI Taxonomy" id="205918"/>
    <lineage>
        <taxon>Bacteria</taxon>
        <taxon>Pseudomonadati</taxon>
        <taxon>Pseudomonadota</taxon>
        <taxon>Gammaproteobacteria</taxon>
        <taxon>Pseudomonadales</taxon>
        <taxon>Pseudomonadaceae</taxon>
        <taxon>Pseudomonas</taxon>
        <taxon>Pseudomonas syringae</taxon>
    </lineage>
</organism>
<sequence>MKDYTLSEFLNRRLALLGERNNLSLLEQCLHGIERECLRVTATAELACTPHPQALGAALTNGQVTTDYSESLLEFITPALKNPAETIDNLDRIHRFVYSKLGDELLWSPSMPCPLPDEEHIPIAYYGTSNIGKLKYVYRKGLALRYGKTMQCIAGIHYNFSLPEDAWALLKQTEDFAGDARDYQSHSYIALIRNFRRYSWLLMYLFGASPALDAGFLRGRKHQLEQHFDADTLYLPYATSLRMSDLGYQSDAQADLTPCYNDLVSYTDSLRKAVATPYKPYVEVGTHDQNGEWVQLNTNVLQIENEYYSNIRPKRVTYSGERPIQALVARGVQYVEVRCLDINPFLPTGISLEQSRFIDAFVLYCALEESQQLARHECSNASSNFLSVVKEGRRPGLSLMRDNRPVDLKTWATELMEKITPIARLLDQAQGIDEHLKSIAVQQAKIDDTALTPSAQVLASMEAHNEGFTAFSLRQSQVHAEYFRTHPLSAQEQADFEAQAKTSIEEQAELEATEEVVDFDTFVGSYQASILSISN</sequence>
<dbReference type="EC" id="6.3.2.2" evidence="1"/>
<dbReference type="EMBL" id="CP000075">
    <property type="protein sequence ID" value="AAY35328.1"/>
    <property type="molecule type" value="Genomic_DNA"/>
</dbReference>
<dbReference type="RefSeq" id="YP_233366.1">
    <property type="nucleotide sequence ID" value="NC_007005.1"/>
</dbReference>
<dbReference type="SMR" id="Q4ZZU4"/>
<dbReference type="STRING" id="205918.Psyr_0255"/>
<dbReference type="KEGG" id="psb:Psyr_0255"/>
<dbReference type="PATRIC" id="fig|205918.7.peg.254"/>
<dbReference type="eggNOG" id="COG2918">
    <property type="taxonomic scope" value="Bacteria"/>
</dbReference>
<dbReference type="HOGENOM" id="CLU_020728_3_0_6"/>
<dbReference type="OrthoDB" id="9803907at2"/>
<dbReference type="UniPathway" id="UPA00142">
    <property type="reaction ID" value="UER00209"/>
</dbReference>
<dbReference type="Proteomes" id="UP000000426">
    <property type="component" value="Chromosome"/>
</dbReference>
<dbReference type="GO" id="GO:0005829">
    <property type="term" value="C:cytosol"/>
    <property type="evidence" value="ECO:0007669"/>
    <property type="project" value="TreeGrafter"/>
</dbReference>
<dbReference type="GO" id="GO:0005524">
    <property type="term" value="F:ATP binding"/>
    <property type="evidence" value="ECO:0007669"/>
    <property type="project" value="UniProtKB-KW"/>
</dbReference>
<dbReference type="GO" id="GO:0004357">
    <property type="term" value="F:glutamate-cysteine ligase activity"/>
    <property type="evidence" value="ECO:0007669"/>
    <property type="project" value="UniProtKB-UniRule"/>
</dbReference>
<dbReference type="GO" id="GO:0046872">
    <property type="term" value="F:metal ion binding"/>
    <property type="evidence" value="ECO:0007669"/>
    <property type="project" value="TreeGrafter"/>
</dbReference>
<dbReference type="GO" id="GO:0006750">
    <property type="term" value="P:glutathione biosynthetic process"/>
    <property type="evidence" value="ECO:0007669"/>
    <property type="project" value="UniProtKB-UniRule"/>
</dbReference>
<dbReference type="Gene3D" id="3.30.590.20">
    <property type="match status" value="1"/>
</dbReference>
<dbReference type="HAMAP" id="MF_00578">
    <property type="entry name" value="Glu_cys_ligase"/>
    <property type="match status" value="1"/>
</dbReference>
<dbReference type="InterPro" id="IPR014746">
    <property type="entry name" value="Gln_synth/guanido_kin_cat_dom"/>
</dbReference>
<dbReference type="InterPro" id="IPR007370">
    <property type="entry name" value="Glu_cys_ligase"/>
</dbReference>
<dbReference type="InterPro" id="IPR006334">
    <property type="entry name" value="Glut_cys_ligase"/>
</dbReference>
<dbReference type="NCBIfam" id="TIGR01434">
    <property type="entry name" value="glu_cys_ligase"/>
    <property type="match status" value="1"/>
</dbReference>
<dbReference type="PANTHER" id="PTHR38761">
    <property type="entry name" value="GLUTAMATE--CYSTEINE LIGASE"/>
    <property type="match status" value="1"/>
</dbReference>
<dbReference type="PANTHER" id="PTHR38761:SF1">
    <property type="entry name" value="GLUTAMATE--CYSTEINE LIGASE"/>
    <property type="match status" value="1"/>
</dbReference>
<dbReference type="Pfam" id="PF04262">
    <property type="entry name" value="Glu_cys_ligase"/>
    <property type="match status" value="1"/>
</dbReference>
<dbReference type="SUPFAM" id="SSF55931">
    <property type="entry name" value="Glutamine synthetase/guanido kinase"/>
    <property type="match status" value="1"/>
</dbReference>
<reference key="1">
    <citation type="journal article" date="2005" name="Proc. Natl. Acad. Sci. U.S.A.">
        <title>Comparison of the complete genome sequences of Pseudomonas syringae pv. syringae B728a and pv. tomato DC3000.</title>
        <authorList>
            <person name="Feil H."/>
            <person name="Feil W.S."/>
            <person name="Chain P."/>
            <person name="Larimer F."/>
            <person name="Dibartolo G."/>
            <person name="Copeland A."/>
            <person name="Lykidis A."/>
            <person name="Trong S."/>
            <person name="Nolan M."/>
            <person name="Goltsman E."/>
            <person name="Thiel J."/>
            <person name="Malfatti S."/>
            <person name="Loper J.E."/>
            <person name="Lapidus A."/>
            <person name="Detter J.C."/>
            <person name="Land M."/>
            <person name="Richardson P.M."/>
            <person name="Kyrpides N.C."/>
            <person name="Ivanova N."/>
            <person name="Lindow S.E."/>
        </authorList>
    </citation>
    <scope>NUCLEOTIDE SEQUENCE [LARGE SCALE GENOMIC DNA]</scope>
    <source>
        <strain>B728a</strain>
    </source>
</reference>
<evidence type="ECO:0000255" key="1">
    <source>
        <dbReference type="HAMAP-Rule" id="MF_00578"/>
    </source>
</evidence>
<name>GSH1_PSEU2</name>
<keyword id="KW-0067">ATP-binding</keyword>
<keyword id="KW-0317">Glutathione biosynthesis</keyword>
<keyword id="KW-0436">Ligase</keyword>
<keyword id="KW-0547">Nucleotide-binding</keyword>
<comment type="catalytic activity">
    <reaction evidence="1">
        <text>L-cysteine + L-glutamate + ATP = gamma-L-glutamyl-L-cysteine + ADP + phosphate + H(+)</text>
        <dbReference type="Rhea" id="RHEA:13285"/>
        <dbReference type="ChEBI" id="CHEBI:15378"/>
        <dbReference type="ChEBI" id="CHEBI:29985"/>
        <dbReference type="ChEBI" id="CHEBI:30616"/>
        <dbReference type="ChEBI" id="CHEBI:35235"/>
        <dbReference type="ChEBI" id="CHEBI:43474"/>
        <dbReference type="ChEBI" id="CHEBI:58173"/>
        <dbReference type="ChEBI" id="CHEBI:456216"/>
        <dbReference type="EC" id="6.3.2.2"/>
    </reaction>
</comment>
<comment type="pathway">
    <text evidence="1">Sulfur metabolism; glutathione biosynthesis; glutathione from L-cysteine and L-glutamate: step 1/2.</text>
</comment>
<comment type="similarity">
    <text evidence="1">Belongs to the glutamate--cysteine ligase type 1 family. Type 1 subfamily.</text>
</comment>
<proteinExistence type="inferred from homology"/>
<feature type="chain" id="PRO_1000025183" description="Glutamate--cysteine ligase">
    <location>
        <begin position="1"/>
        <end position="535"/>
    </location>
</feature>